<gene>
    <name evidence="1" type="primary">dadD</name>
    <name type="ordered locus">Mbar_A3252</name>
</gene>
<reference key="1">
    <citation type="journal article" date="2006" name="J. Bacteriol.">
        <title>The Methanosarcina barkeri genome: comparative analysis with Methanosarcina acetivorans and Methanosarcina mazei reveals extensive rearrangement within methanosarcinal genomes.</title>
        <authorList>
            <person name="Maeder D.L."/>
            <person name="Anderson I."/>
            <person name="Brettin T.S."/>
            <person name="Bruce D.C."/>
            <person name="Gilna P."/>
            <person name="Han C.S."/>
            <person name="Lapidus A."/>
            <person name="Metcalf W.W."/>
            <person name="Saunders E."/>
            <person name="Tapia R."/>
            <person name="Sowers K.R."/>
        </authorList>
    </citation>
    <scope>NUCLEOTIDE SEQUENCE [LARGE SCALE GENOMIC DNA]</scope>
    <source>
        <strain>Fusaro / DSM 804</strain>
    </source>
</reference>
<protein>
    <recommendedName>
        <fullName evidence="1">5'-deoxyadenosine deaminase</fullName>
        <shortName evidence="1">5'-dA deaminase</shortName>
        <ecNumber evidence="1">3.5.4.41</ecNumber>
    </recommendedName>
    <alternativeName>
        <fullName evidence="1">5'-methylthioadenosine deaminase</fullName>
        <shortName evidence="1">MTA deaminase</shortName>
        <ecNumber evidence="1">3.5.4.31</ecNumber>
    </alternativeName>
    <alternativeName>
        <fullName evidence="1">Adenosine deaminase</fullName>
        <ecNumber evidence="1">3.5.4.4</ecNumber>
    </alternativeName>
    <alternativeName>
        <fullName evidence="1">S-adenosylhomocysteine deaminase</fullName>
        <shortName evidence="1">SAH deaminase</shortName>
        <ecNumber evidence="1">3.5.4.28</ecNumber>
    </alternativeName>
</protein>
<proteinExistence type="inferred from homology"/>
<organism>
    <name type="scientific">Methanosarcina barkeri (strain Fusaro / DSM 804)</name>
    <dbReference type="NCBI Taxonomy" id="269797"/>
    <lineage>
        <taxon>Archaea</taxon>
        <taxon>Methanobacteriati</taxon>
        <taxon>Methanobacteriota</taxon>
        <taxon>Stenosarchaea group</taxon>
        <taxon>Methanomicrobia</taxon>
        <taxon>Methanosarcinales</taxon>
        <taxon>Methanosarcinaceae</taxon>
        <taxon>Methanosarcina</taxon>
    </lineage>
</organism>
<comment type="function">
    <text evidence="1">Catalyzes the deamination of three SAM-derived enzymatic products, namely 5'-deoxyadenosine, S-adenosyl-L-homocysteine, and 5'-methylthioadenosine, to produce the inosine analogs. Can also deaminate adenosine. The preferred substrate for this enzyme is 5'-deoxyadenosine, but all these substrates are efficiently deaminated. Likely functions in a S-adenosyl-L-methionine (SAM) recycling pathway from S-adenosyl-L-homocysteine (SAH) produced from SAM-dependent methylation reactions. May also be involved in the recycling of 5'-deoxyadenosine, whereupon the 5'-deoxyribose moiety of 5'-deoxyinosine is further metabolized to deoxyhexoses used for the biosynthesis of aromatic amino acids in methanogens.</text>
</comment>
<comment type="catalytic activity">
    <reaction evidence="1">
        <text>5'-deoxyadenosine + H2O + H(+) = 5'-deoxyinosine + NH4(+)</text>
        <dbReference type="Rhea" id="RHEA:42892"/>
        <dbReference type="ChEBI" id="CHEBI:15377"/>
        <dbReference type="ChEBI" id="CHEBI:15378"/>
        <dbReference type="ChEBI" id="CHEBI:17319"/>
        <dbReference type="ChEBI" id="CHEBI:28938"/>
        <dbReference type="ChEBI" id="CHEBI:82775"/>
        <dbReference type="EC" id="3.5.4.41"/>
    </reaction>
    <physiologicalReaction direction="left-to-right" evidence="1">
        <dbReference type="Rhea" id="RHEA:42893"/>
    </physiologicalReaction>
</comment>
<comment type="catalytic activity">
    <reaction evidence="1">
        <text>S-adenosyl-L-homocysteine + H2O + H(+) = S-inosyl-L-homocysteine + NH4(+)</text>
        <dbReference type="Rhea" id="RHEA:20716"/>
        <dbReference type="ChEBI" id="CHEBI:15377"/>
        <dbReference type="ChEBI" id="CHEBI:15378"/>
        <dbReference type="ChEBI" id="CHEBI:28938"/>
        <dbReference type="ChEBI" id="CHEBI:57856"/>
        <dbReference type="ChEBI" id="CHEBI:57985"/>
        <dbReference type="EC" id="3.5.4.28"/>
    </reaction>
    <physiologicalReaction direction="left-to-right" evidence="1">
        <dbReference type="Rhea" id="RHEA:20717"/>
    </physiologicalReaction>
</comment>
<comment type="catalytic activity">
    <reaction evidence="1">
        <text>S-methyl-5'-thioadenosine + H2O + H(+) = S-methyl-5'-thioinosine + NH4(+)</text>
        <dbReference type="Rhea" id="RHEA:25025"/>
        <dbReference type="ChEBI" id="CHEBI:15377"/>
        <dbReference type="ChEBI" id="CHEBI:15378"/>
        <dbReference type="ChEBI" id="CHEBI:17509"/>
        <dbReference type="ChEBI" id="CHEBI:28938"/>
        <dbReference type="ChEBI" id="CHEBI:48595"/>
        <dbReference type="EC" id="3.5.4.31"/>
    </reaction>
    <physiologicalReaction direction="left-to-right" evidence="1">
        <dbReference type="Rhea" id="RHEA:25026"/>
    </physiologicalReaction>
</comment>
<comment type="catalytic activity">
    <reaction evidence="1">
        <text>adenosine + H2O + H(+) = inosine + NH4(+)</text>
        <dbReference type="Rhea" id="RHEA:24408"/>
        <dbReference type="ChEBI" id="CHEBI:15377"/>
        <dbReference type="ChEBI" id="CHEBI:15378"/>
        <dbReference type="ChEBI" id="CHEBI:16335"/>
        <dbReference type="ChEBI" id="CHEBI:17596"/>
        <dbReference type="ChEBI" id="CHEBI:28938"/>
        <dbReference type="EC" id="3.5.4.4"/>
    </reaction>
    <physiologicalReaction direction="left-to-right" evidence="1">
        <dbReference type="Rhea" id="RHEA:24409"/>
    </physiologicalReaction>
</comment>
<comment type="cofactor">
    <cofactor evidence="1">
        <name>Zn(2+)</name>
        <dbReference type="ChEBI" id="CHEBI:29105"/>
    </cofactor>
    <text evidence="1">Binds 1 zinc ion per subunit.</text>
</comment>
<comment type="pathway">
    <text evidence="1">Amino-acid biosynthesis; S-adenosyl-L-methionine biosynthesis.</text>
</comment>
<comment type="subunit">
    <text evidence="1">Homotetramer.</text>
</comment>
<comment type="miscellaneous">
    <text evidence="1">SAH is a product of SAM methyltransferases and is known to be a feedback inhibitor of these enzymes. As a result of this inhibition, organisms have evolved efficient enzymes to metabolize SAH via different pathways. The pathway found in methanogens differs from the canonical pathway, it uses the deamination of S-adenosyl-L-homocysteine to form S-inosyl-L-homocysteine for the regeneration of SAM from S-adenosyl-L-homocysteine. 5'-deoxyadenosine is a radical SAM enzyme reaction product which strongly inhibits radical SAM enzymes. A pathway for removing this product must be present in methanogens where the MTA/SAH nucleosidase which normally metabolizes this compound is absent.</text>
</comment>
<comment type="similarity">
    <text evidence="1">Belongs to the metallo-dependent hydrolases superfamily. MTA/SAH deaminase family.</text>
</comment>
<accession>Q466Q9</accession>
<feature type="chain" id="PRO_0000312480" description="5'-deoxyadenosine deaminase">
    <location>
        <begin position="1"/>
        <end position="432"/>
    </location>
</feature>
<feature type="binding site" evidence="1">
    <location>
        <position position="63"/>
    </location>
    <ligand>
        <name>Zn(2+)</name>
        <dbReference type="ChEBI" id="CHEBI:29105"/>
    </ligand>
</feature>
<feature type="binding site" evidence="1">
    <location>
        <position position="65"/>
    </location>
    <ligand>
        <name>Zn(2+)</name>
        <dbReference type="ChEBI" id="CHEBI:29105"/>
    </ligand>
</feature>
<feature type="binding site" evidence="1">
    <location>
        <position position="92"/>
    </location>
    <ligand>
        <name>substrate</name>
    </ligand>
</feature>
<feature type="binding site" evidence="1">
    <location>
        <position position="184"/>
    </location>
    <ligand>
        <name>substrate</name>
    </ligand>
</feature>
<feature type="binding site" evidence="1">
    <location>
        <position position="211"/>
    </location>
    <ligand>
        <name>Zn(2+)</name>
        <dbReference type="ChEBI" id="CHEBI:29105"/>
    </ligand>
</feature>
<feature type="binding site" evidence="1">
    <location>
        <position position="214"/>
    </location>
    <ligand>
        <name>substrate</name>
    </ligand>
</feature>
<feature type="binding site" evidence="1">
    <location>
        <position position="299"/>
    </location>
    <ligand>
        <name>substrate</name>
    </ligand>
</feature>
<feature type="binding site" evidence="1">
    <location>
        <position position="299"/>
    </location>
    <ligand>
        <name>Zn(2+)</name>
        <dbReference type="ChEBI" id="CHEBI:29105"/>
    </ligand>
</feature>
<dbReference type="EC" id="3.5.4.41" evidence="1"/>
<dbReference type="EC" id="3.5.4.31" evidence="1"/>
<dbReference type="EC" id="3.5.4.4" evidence="1"/>
<dbReference type="EC" id="3.5.4.28" evidence="1"/>
<dbReference type="EMBL" id="CP000099">
    <property type="protein sequence ID" value="AAZ72133.1"/>
    <property type="molecule type" value="Genomic_DNA"/>
</dbReference>
<dbReference type="SMR" id="Q466Q9"/>
<dbReference type="STRING" id="269797.Mbar_A3252"/>
<dbReference type="PaxDb" id="269797-Mbar_A3252"/>
<dbReference type="KEGG" id="mba:Mbar_A3252"/>
<dbReference type="eggNOG" id="arCOG00695">
    <property type="taxonomic scope" value="Archaea"/>
</dbReference>
<dbReference type="HOGENOM" id="CLU_012358_2_1_2"/>
<dbReference type="OrthoDB" id="372084at2157"/>
<dbReference type="UniPathway" id="UPA00315"/>
<dbReference type="GO" id="GO:0090613">
    <property type="term" value="F:5'-deoxyadenosine deaminase activity"/>
    <property type="evidence" value="ECO:0007669"/>
    <property type="project" value="UniProtKB-UniRule"/>
</dbReference>
<dbReference type="GO" id="GO:0090614">
    <property type="term" value="F:5'-methylthioadenosine deaminase activity"/>
    <property type="evidence" value="ECO:0007669"/>
    <property type="project" value="UniProtKB-EC"/>
</dbReference>
<dbReference type="GO" id="GO:0004000">
    <property type="term" value="F:adenosine deaminase activity"/>
    <property type="evidence" value="ECO:0007669"/>
    <property type="project" value="UniProtKB-UniRule"/>
</dbReference>
<dbReference type="GO" id="GO:0046872">
    <property type="term" value="F:metal ion binding"/>
    <property type="evidence" value="ECO:0007669"/>
    <property type="project" value="UniProtKB-KW"/>
</dbReference>
<dbReference type="GO" id="GO:0050270">
    <property type="term" value="F:S-adenosylhomocysteine deaminase activity"/>
    <property type="evidence" value="ECO:0007669"/>
    <property type="project" value="UniProtKB-EC"/>
</dbReference>
<dbReference type="GO" id="GO:0006556">
    <property type="term" value="P:S-adenosylmethionine biosynthetic process"/>
    <property type="evidence" value="ECO:0007669"/>
    <property type="project" value="UniProtKB-UniRule"/>
</dbReference>
<dbReference type="CDD" id="cd01298">
    <property type="entry name" value="ATZ_TRZ_like"/>
    <property type="match status" value="1"/>
</dbReference>
<dbReference type="FunFam" id="3.20.20.140:FF:000014">
    <property type="entry name" value="5-methylthioadenosine/S-adenosylhomocysteine deaminase"/>
    <property type="match status" value="1"/>
</dbReference>
<dbReference type="Gene3D" id="3.20.20.140">
    <property type="entry name" value="Metal-dependent hydrolases"/>
    <property type="match status" value="1"/>
</dbReference>
<dbReference type="Gene3D" id="2.30.40.10">
    <property type="entry name" value="Urease, subunit C, domain 1"/>
    <property type="match status" value="1"/>
</dbReference>
<dbReference type="HAMAP" id="MF_01281">
    <property type="entry name" value="MTA_SAH_deamin"/>
    <property type="match status" value="1"/>
</dbReference>
<dbReference type="InterPro" id="IPR006680">
    <property type="entry name" value="Amidohydro-rel"/>
</dbReference>
<dbReference type="InterPro" id="IPR023512">
    <property type="entry name" value="Deaminase_MtaD/DadD"/>
</dbReference>
<dbReference type="InterPro" id="IPR011059">
    <property type="entry name" value="Metal-dep_hydrolase_composite"/>
</dbReference>
<dbReference type="InterPro" id="IPR032466">
    <property type="entry name" value="Metal_Hydrolase"/>
</dbReference>
<dbReference type="InterPro" id="IPR050287">
    <property type="entry name" value="MTA/SAH_deaminase"/>
</dbReference>
<dbReference type="NCBIfam" id="NF004701">
    <property type="entry name" value="PRK06038.1"/>
    <property type="match status" value="1"/>
</dbReference>
<dbReference type="PANTHER" id="PTHR43794:SF11">
    <property type="entry name" value="AMIDOHYDROLASE-RELATED DOMAIN-CONTAINING PROTEIN"/>
    <property type="match status" value="1"/>
</dbReference>
<dbReference type="PANTHER" id="PTHR43794">
    <property type="entry name" value="AMINOHYDROLASE SSNA-RELATED"/>
    <property type="match status" value="1"/>
</dbReference>
<dbReference type="Pfam" id="PF01979">
    <property type="entry name" value="Amidohydro_1"/>
    <property type="match status" value="1"/>
</dbReference>
<dbReference type="SUPFAM" id="SSF51338">
    <property type="entry name" value="Composite domain of metallo-dependent hydrolases"/>
    <property type="match status" value="1"/>
</dbReference>
<dbReference type="SUPFAM" id="SSF51556">
    <property type="entry name" value="Metallo-dependent hydrolases"/>
    <property type="match status" value="1"/>
</dbReference>
<sequence>MADIIVKNAYVMTMDPDEGDLKNGTVVIEDGKITEIGEKTSESADTVIDAKHSVVMPGLVNTHTHAAMTLFRGYADDLQLADWLEGHIWPAEAKLTAEDVYKGSLLACLEMIRSGTTSFADMYFYMDETAKAVEASGLRASLCHGLIELWNEEKGATDLKEGKRFVRAWQGAADGRIKTMYGPHAPNTCSEEFLAKVREEANRDGAGIHIHLLETEAELLAMKERYGKCSVHLLEDIGFLGPDVLAAHCVWLSDGDIEILGKRGVNVSHNVISNMKLASGIAPVYKMLEKGVNVSLGTDGCASNNNLDLFEEMKTAALLHKVNTFSPTALPARQVLQMGTVNGAKALGTETGMLKVGMKADLIVVDMKKAHLTPCFDVPSHLVYSAKGSDVRTTIVNGKVLMDDYKVLALDEQKVMEDAQKAAEELVTRVNA</sequence>
<evidence type="ECO:0000255" key="1">
    <source>
        <dbReference type="HAMAP-Rule" id="MF_01281"/>
    </source>
</evidence>
<keyword id="KW-0378">Hydrolase</keyword>
<keyword id="KW-0479">Metal-binding</keyword>
<keyword id="KW-0862">Zinc</keyword>
<name>DADD_METBF</name>